<name>ACTZ_NEUCR</name>
<gene>
    <name type="primary">ro-4</name>
    <name type="ORF">2E4.190</name>
    <name type="ORF">NCU04247</name>
</gene>
<dbReference type="EMBL" id="L31505">
    <property type="protein sequence ID" value="AAA64907.1"/>
    <property type="molecule type" value="Genomic_DNA"/>
</dbReference>
<dbReference type="EMBL" id="U14008">
    <property type="protein sequence ID" value="AAB02296.1"/>
    <property type="status" value="ALT_SEQ"/>
    <property type="molecule type" value="Genomic_DNA"/>
</dbReference>
<dbReference type="EMBL" id="AL451022">
    <property type="protein sequence ID" value="CAC18320.1"/>
    <property type="molecule type" value="Genomic_DNA"/>
</dbReference>
<dbReference type="EMBL" id="CM002240">
    <property type="protein sequence ID" value="EAA32002.1"/>
    <property type="molecule type" value="Genomic_DNA"/>
</dbReference>
<dbReference type="PIR" id="A54802">
    <property type="entry name" value="A54802"/>
</dbReference>
<dbReference type="PIR" id="T46655">
    <property type="entry name" value="T46655"/>
</dbReference>
<dbReference type="RefSeq" id="XP_961238.1">
    <property type="nucleotide sequence ID" value="XM_956145.2"/>
</dbReference>
<dbReference type="SMR" id="P38673"/>
<dbReference type="STRING" id="367110.P38673"/>
<dbReference type="PaxDb" id="5141-EFNCRP00000003893"/>
<dbReference type="EnsemblFungi" id="EAA32002">
    <property type="protein sequence ID" value="EAA32002"/>
    <property type="gene ID" value="NCU04247"/>
</dbReference>
<dbReference type="GeneID" id="3877401"/>
<dbReference type="KEGG" id="ncr:NCU04247"/>
<dbReference type="VEuPathDB" id="FungiDB:NCU04247"/>
<dbReference type="HOGENOM" id="CLU_027965_0_2_1"/>
<dbReference type="InParanoid" id="P38673"/>
<dbReference type="OMA" id="YTTWTGG"/>
<dbReference type="OrthoDB" id="5132116at2759"/>
<dbReference type="Proteomes" id="UP000001805">
    <property type="component" value="Chromosome 2, Linkage Group V"/>
</dbReference>
<dbReference type="GO" id="GO:0005737">
    <property type="term" value="C:cytoplasm"/>
    <property type="evidence" value="ECO:0007669"/>
    <property type="project" value="UniProtKB-KW"/>
</dbReference>
<dbReference type="GO" id="GO:0005869">
    <property type="term" value="C:dynactin complex"/>
    <property type="evidence" value="ECO:0000318"/>
    <property type="project" value="GO_Central"/>
</dbReference>
<dbReference type="GO" id="GO:0005524">
    <property type="term" value="F:ATP binding"/>
    <property type="evidence" value="ECO:0007669"/>
    <property type="project" value="UniProtKB-KW"/>
</dbReference>
<dbReference type="CDD" id="cd10216">
    <property type="entry name" value="ASKHA_NBD_Arp1"/>
    <property type="match status" value="1"/>
</dbReference>
<dbReference type="FunFam" id="3.90.640.10:FF:000015">
    <property type="entry name" value="Actin-like protein"/>
    <property type="match status" value="1"/>
</dbReference>
<dbReference type="FunFam" id="3.30.420.40:FF:000018">
    <property type="entry name" value="Actin-like protein (Centractin)"/>
    <property type="match status" value="1"/>
</dbReference>
<dbReference type="Gene3D" id="3.30.420.40">
    <property type="match status" value="2"/>
</dbReference>
<dbReference type="Gene3D" id="3.90.640.10">
    <property type="entry name" value="Actin, Chain A, domain 4"/>
    <property type="match status" value="1"/>
</dbReference>
<dbReference type="InterPro" id="IPR004000">
    <property type="entry name" value="Actin"/>
</dbReference>
<dbReference type="InterPro" id="IPR020902">
    <property type="entry name" value="Actin/actin-like_CS"/>
</dbReference>
<dbReference type="InterPro" id="IPR043129">
    <property type="entry name" value="ATPase_NBD"/>
</dbReference>
<dbReference type="PANTHER" id="PTHR11937">
    <property type="entry name" value="ACTIN"/>
    <property type="match status" value="1"/>
</dbReference>
<dbReference type="Pfam" id="PF00022">
    <property type="entry name" value="Actin"/>
    <property type="match status" value="1"/>
</dbReference>
<dbReference type="PRINTS" id="PR00190">
    <property type="entry name" value="ACTIN"/>
</dbReference>
<dbReference type="SMART" id="SM00268">
    <property type="entry name" value="ACTIN"/>
    <property type="match status" value="1"/>
</dbReference>
<dbReference type="SUPFAM" id="SSF53067">
    <property type="entry name" value="Actin-like ATPase domain"/>
    <property type="match status" value="2"/>
</dbReference>
<dbReference type="PROSITE" id="PS01132">
    <property type="entry name" value="ACTINS_ACT_LIKE"/>
    <property type="match status" value="1"/>
</dbReference>
<reference key="1">
    <citation type="journal article" date="1994" name="J. Cell Biol.">
        <title>Cytoplasmic dynein and actin-related protein Arp1 are required for normal nuclear distribution in filamentous fungi.</title>
        <authorList>
            <person name="Plamann M."/>
            <person name="Minke P.F."/>
            <person name="Tinsley J.H."/>
            <person name="Bruno K.S."/>
        </authorList>
    </citation>
    <scope>NUCLEOTIDE SEQUENCE [GENOMIC DNA]</scope>
    <source>
        <strain>ATCC 24698 / 74-OR23-1A / CBS 708.71 / DSM 1257 / FGSC 987</strain>
    </source>
</reference>
<reference key="2">
    <citation type="journal article" date="1995" name="Mol. Gen. Genet.">
        <title>A fungal actin-related protein involved in nuclear migration.</title>
        <authorList>
            <person name="Robb M.J."/>
            <person name="Wilson M.A."/>
            <person name="Vierula P.J."/>
        </authorList>
    </citation>
    <scope>NUCLEOTIDE SEQUENCE [GENOMIC DNA]</scope>
    <source>
        <strain>ATCC 24698 / 74-OR23-1A / CBS 708.71 / DSM 1257 / FGSC 987</strain>
    </source>
</reference>
<reference key="3">
    <citation type="journal article" date="2003" name="Nucleic Acids Res.">
        <title>What's in the genome of a filamentous fungus? Analysis of the Neurospora genome sequence.</title>
        <authorList>
            <person name="Mannhaupt G."/>
            <person name="Montrone C."/>
            <person name="Haase D."/>
            <person name="Mewes H.-W."/>
            <person name="Aign V."/>
            <person name="Hoheisel J.D."/>
            <person name="Fartmann B."/>
            <person name="Nyakatura G."/>
            <person name="Kempken F."/>
            <person name="Maier J."/>
            <person name="Schulte U."/>
        </authorList>
    </citation>
    <scope>NUCLEOTIDE SEQUENCE [LARGE SCALE GENOMIC DNA]</scope>
    <source>
        <strain>ATCC 24698 / 74-OR23-1A / CBS 708.71 / DSM 1257 / FGSC 987</strain>
    </source>
</reference>
<reference key="4">
    <citation type="journal article" date="2003" name="Nature">
        <title>The genome sequence of the filamentous fungus Neurospora crassa.</title>
        <authorList>
            <person name="Galagan J.E."/>
            <person name="Calvo S.E."/>
            <person name="Borkovich K.A."/>
            <person name="Selker E.U."/>
            <person name="Read N.D."/>
            <person name="Jaffe D.B."/>
            <person name="FitzHugh W."/>
            <person name="Ma L.-J."/>
            <person name="Smirnov S."/>
            <person name="Purcell S."/>
            <person name="Rehman B."/>
            <person name="Elkins T."/>
            <person name="Engels R."/>
            <person name="Wang S."/>
            <person name="Nielsen C.B."/>
            <person name="Butler J."/>
            <person name="Endrizzi M."/>
            <person name="Qui D."/>
            <person name="Ianakiev P."/>
            <person name="Bell-Pedersen D."/>
            <person name="Nelson M.A."/>
            <person name="Werner-Washburne M."/>
            <person name="Selitrennikoff C.P."/>
            <person name="Kinsey J.A."/>
            <person name="Braun E.L."/>
            <person name="Zelter A."/>
            <person name="Schulte U."/>
            <person name="Kothe G.O."/>
            <person name="Jedd G."/>
            <person name="Mewes H.-W."/>
            <person name="Staben C."/>
            <person name="Marcotte E."/>
            <person name="Greenberg D."/>
            <person name="Roy A."/>
            <person name="Foley K."/>
            <person name="Naylor J."/>
            <person name="Stange-Thomann N."/>
            <person name="Barrett R."/>
            <person name="Gnerre S."/>
            <person name="Kamal M."/>
            <person name="Kamvysselis M."/>
            <person name="Mauceli E.W."/>
            <person name="Bielke C."/>
            <person name="Rudd S."/>
            <person name="Frishman D."/>
            <person name="Krystofova S."/>
            <person name="Rasmussen C."/>
            <person name="Metzenberg R.L."/>
            <person name="Perkins D.D."/>
            <person name="Kroken S."/>
            <person name="Cogoni C."/>
            <person name="Macino G."/>
            <person name="Catcheside D.E.A."/>
            <person name="Li W."/>
            <person name="Pratt R.J."/>
            <person name="Osmani S.A."/>
            <person name="DeSouza C.P.C."/>
            <person name="Glass N.L."/>
            <person name="Orbach M.J."/>
            <person name="Berglund J.A."/>
            <person name="Voelker R."/>
            <person name="Yarden O."/>
            <person name="Plamann M."/>
            <person name="Seiler S."/>
            <person name="Dunlap J.C."/>
            <person name="Radford A."/>
            <person name="Aramayo R."/>
            <person name="Natvig D.O."/>
            <person name="Alex L.A."/>
            <person name="Mannhaupt G."/>
            <person name="Ebbole D.J."/>
            <person name="Freitag M."/>
            <person name="Paulsen I."/>
            <person name="Sachs M.S."/>
            <person name="Lander E.S."/>
            <person name="Nusbaum C."/>
            <person name="Birren B.W."/>
        </authorList>
    </citation>
    <scope>NUCLEOTIDE SEQUENCE [LARGE SCALE GENOMIC DNA]</scope>
    <source>
        <strain>ATCC 24698 / 74-OR23-1A / CBS 708.71 / DSM 1257 / FGSC 987</strain>
    </source>
</reference>
<sequence>MTDSLHNAPIVLDNGSGTIRAGFAGDDVPKCHFPSFVGRPKHLRVLAGALEGEVFIGQKAASELRGLLKIRYPLEHGIVTDWDDMEKIWAYVYDEGLKTLSEEHPVLLTEPPLNPRANRDTAAQILFETFNVPALYTSIQAVLSLYASGRTTGVVLDSGDGVSHAVPVYQGFTVPNSIRRIDVAGRDVTEYLQTLLRKSGYVFHTSAEKEVVRLIKESVTYVAHDPRKEEKEWAAAKMDPAKIAEYVLPDGNKLKIGAERFRAPEILFDPEIIGLEYPGVHQIVVDSINRTDLDLRRDLYSNIVLSGGSTLTKGFGDRLLTEVQKLAVKDMRIKIFAPPERKYSTWIGGSILAGLSTFRKMWVSIDDWHENPDIIHTKFT</sequence>
<evidence type="ECO:0000250" key="1"/>
<evidence type="ECO:0000305" key="2"/>
<keyword id="KW-0067">ATP-binding</keyword>
<keyword id="KW-0963">Cytoplasm</keyword>
<keyword id="KW-0206">Cytoskeleton</keyword>
<keyword id="KW-0547">Nucleotide-binding</keyword>
<keyword id="KW-1185">Reference proteome</keyword>
<feature type="chain" id="PRO_0000089064" description="Actin-like protein">
    <location>
        <begin position="1"/>
        <end position="380"/>
    </location>
</feature>
<organism>
    <name type="scientific">Neurospora crassa (strain ATCC 24698 / 74-OR23-1A / CBS 708.71 / DSM 1257 / FGSC 987)</name>
    <dbReference type="NCBI Taxonomy" id="367110"/>
    <lineage>
        <taxon>Eukaryota</taxon>
        <taxon>Fungi</taxon>
        <taxon>Dikarya</taxon>
        <taxon>Ascomycota</taxon>
        <taxon>Pezizomycotina</taxon>
        <taxon>Sordariomycetes</taxon>
        <taxon>Sordariomycetidae</taxon>
        <taxon>Sordariales</taxon>
        <taxon>Sordariaceae</taxon>
        <taxon>Neurospora</taxon>
    </lineage>
</organism>
<comment type="function">
    <text>Involved in nuclear migration. May function as a component of the dynactin complex which activates force generation by cytoplasmic dynein.</text>
</comment>
<comment type="subcellular location">
    <subcellularLocation>
        <location evidence="1">Cytoplasm</location>
        <location evidence="1">Cytoskeleton</location>
    </subcellularLocation>
</comment>
<comment type="similarity">
    <text evidence="2">Belongs to the actin family. ARP1 subfamily.</text>
</comment>
<protein>
    <recommendedName>
        <fullName>Actin-like protein</fullName>
    </recommendedName>
    <alternativeName>
        <fullName>Centractin</fullName>
    </alternativeName>
</protein>
<accession>P38673</accession>
<accession>Q01258</accession>
<accession>Q7RVD0</accession>
<proteinExistence type="inferred from homology"/>